<name>MURD2_XANOM</name>
<protein>
    <recommendedName>
        <fullName evidence="1 4">UDP-N-acetylmuramoyl-L-alanine--L-glutamate ligase</fullName>
        <ecNumber evidence="1 2">6.3.2.53</ecNumber>
    </recommendedName>
    <alternativeName>
        <fullName evidence="1 4">UDP-N-acetylmuramoyl-L-alanyl-L-glutamate synthetase</fullName>
        <shortName evidence="1 3">UDP-MurNAc-L-Ala-L-Glu synthetase</shortName>
    </alternativeName>
</protein>
<proteinExistence type="evidence at protein level"/>
<keyword id="KW-0067">ATP-binding</keyword>
<keyword id="KW-0131">Cell cycle</keyword>
<keyword id="KW-0132">Cell division</keyword>
<keyword id="KW-0133">Cell shape</keyword>
<keyword id="KW-0961">Cell wall biogenesis/degradation</keyword>
<keyword id="KW-0963">Cytoplasm</keyword>
<keyword id="KW-0436">Ligase</keyword>
<keyword id="KW-0547">Nucleotide-binding</keyword>
<keyword id="KW-0573">Peptidoglycan synthesis</keyword>
<feature type="chain" id="PRO_0000257263" description="UDP-N-acetylmuramoyl-L-alanine--L-glutamate ligase">
    <location>
        <begin position="1"/>
        <end position="468"/>
    </location>
</feature>
<feature type="binding site" evidence="1">
    <location>
        <begin position="122"/>
        <end position="128"/>
    </location>
    <ligand>
        <name>ATP</name>
        <dbReference type="ChEBI" id="CHEBI:30616"/>
    </ligand>
</feature>
<gene>
    <name evidence="1 3" type="primary">murD2</name>
    <name type="ordered locus">XOO1320</name>
</gene>
<accession>Q2P5V2</accession>
<reference key="1">
    <citation type="journal article" date="2005" name="Jpn. Agric. Res. Q.">
        <title>Genome sequence of Xanthomonas oryzae pv. oryzae suggests contribution of large numbers of effector genes and insertion sequences to its race diversity.</title>
        <authorList>
            <person name="Ochiai H."/>
            <person name="Inoue Y."/>
            <person name="Takeya M."/>
            <person name="Sasaki A."/>
            <person name="Kaku H."/>
        </authorList>
    </citation>
    <scope>NUCLEOTIDE SEQUENCE [LARGE SCALE GENOMIC DNA]</scope>
    <source>
        <strain>MAFF 311018</strain>
    </source>
</reference>
<reference key="2">
    <citation type="journal article" date="2017" name="J. Am. Chem. Soc.">
        <title>A glycopeptidyl-glutamate epimerase for bacterial peptidoglycan biosynthesis.</title>
        <authorList>
            <person name="Feng R."/>
            <person name="Satoh Y."/>
            <person name="Ogasawara Y."/>
            <person name="Yoshimura T."/>
            <person name="Dairi T."/>
        </authorList>
    </citation>
    <scope>FUNCTION</scope>
    <scope>CATALYTIC ACTIVITY</scope>
    <scope>PATHWAY</scope>
    <source>
        <strain>MAFF 311018</strain>
    </source>
</reference>
<evidence type="ECO:0000255" key="1">
    <source>
        <dbReference type="HAMAP-Rule" id="MF_02208"/>
    </source>
</evidence>
<evidence type="ECO:0000269" key="2">
    <source>
    </source>
</evidence>
<evidence type="ECO:0000303" key="3">
    <source>
    </source>
</evidence>
<evidence type="ECO:0000305" key="4"/>
<evidence type="ECO:0000305" key="5">
    <source>
    </source>
</evidence>
<dbReference type="EC" id="6.3.2.53" evidence="1 2"/>
<dbReference type="EMBL" id="AP008229">
    <property type="protein sequence ID" value="BAE68075.1"/>
    <property type="molecule type" value="Genomic_DNA"/>
</dbReference>
<dbReference type="SMR" id="Q2P5V2"/>
<dbReference type="KEGG" id="xom:XOO1320"/>
<dbReference type="HOGENOM" id="CLU_032540_4_1_6"/>
<dbReference type="BioCyc" id="MetaCyc:MONOMER-20388"/>
<dbReference type="UniPathway" id="UPA00219"/>
<dbReference type="GO" id="GO:0005737">
    <property type="term" value="C:cytoplasm"/>
    <property type="evidence" value="ECO:0007669"/>
    <property type="project" value="UniProtKB-SubCell"/>
</dbReference>
<dbReference type="GO" id="GO:0005524">
    <property type="term" value="F:ATP binding"/>
    <property type="evidence" value="ECO:0007669"/>
    <property type="project" value="UniProtKB-UniRule"/>
</dbReference>
<dbReference type="GO" id="GO:0004326">
    <property type="term" value="F:tetrahydrofolylpolyglutamate synthase activity"/>
    <property type="evidence" value="ECO:0007669"/>
    <property type="project" value="InterPro"/>
</dbReference>
<dbReference type="GO" id="GO:0008764">
    <property type="term" value="F:UDP-N-acetylmuramoylalanine-D-glutamate ligase activity"/>
    <property type="evidence" value="ECO:0007669"/>
    <property type="project" value="InterPro"/>
</dbReference>
<dbReference type="GO" id="GO:0051301">
    <property type="term" value="P:cell division"/>
    <property type="evidence" value="ECO:0007669"/>
    <property type="project" value="UniProtKB-KW"/>
</dbReference>
<dbReference type="GO" id="GO:0071555">
    <property type="term" value="P:cell wall organization"/>
    <property type="evidence" value="ECO:0007669"/>
    <property type="project" value="UniProtKB-KW"/>
</dbReference>
<dbReference type="GO" id="GO:0009252">
    <property type="term" value="P:peptidoglycan biosynthetic process"/>
    <property type="evidence" value="ECO:0007669"/>
    <property type="project" value="UniProtKB-UniRule"/>
</dbReference>
<dbReference type="GO" id="GO:0008360">
    <property type="term" value="P:regulation of cell shape"/>
    <property type="evidence" value="ECO:0007669"/>
    <property type="project" value="UniProtKB-KW"/>
</dbReference>
<dbReference type="Gene3D" id="3.90.190.20">
    <property type="entry name" value="Mur ligase, C-terminal domain"/>
    <property type="match status" value="1"/>
</dbReference>
<dbReference type="Gene3D" id="3.40.1190.10">
    <property type="entry name" value="Mur-like, catalytic domain"/>
    <property type="match status" value="1"/>
</dbReference>
<dbReference type="Gene3D" id="3.40.50.720">
    <property type="entry name" value="NAD(P)-binding Rossmann-like Domain"/>
    <property type="match status" value="1"/>
</dbReference>
<dbReference type="HAMAP" id="MF_00639">
    <property type="entry name" value="MurD"/>
    <property type="match status" value="1"/>
</dbReference>
<dbReference type="HAMAP" id="MF_02208">
    <property type="entry name" value="MurD2_subfam"/>
    <property type="match status" value="1"/>
</dbReference>
<dbReference type="InterPro" id="IPR018109">
    <property type="entry name" value="Folylpolyglutamate_synth_CS"/>
</dbReference>
<dbReference type="InterPro" id="IPR036565">
    <property type="entry name" value="Mur-like_cat_sf"/>
</dbReference>
<dbReference type="InterPro" id="IPR036615">
    <property type="entry name" value="Mur_ligase_C_dom_sf"/>
</dbReference>
<dbReference type="InterPro" id="IPR013221">
    <property type="entry name" value="Mur_ligase_cen"/>
</dbReference>
<dbReference type="InterPro" id="IPR005762">
    <property type="entry name" value="MurD"/>
</dbReference>
<dbReference type="InterPro" id="IPR043687">
    <property type="entry name" value="MurD2"/>
</dbReference>
<dbReference type="NCBIfam" id="TIGR01087">
    <property type="entry name" value="murD"/>
    <property type="match status" value="1"/>
</dbReference>
<dbReference type="PANTHER" id="PTHR43692">
    <property type="entry name" value="UDP-N-ACETYLMURAMOYLALANINE--D-GLUTAMATE LIGASE"/>
    <property type="match status" value="1"/>
</dbReference>
<dbReference type="PANTHER" id="PTHR43692:SF1">
    <property type="entry name" value="UDP-N-ACETYLMURAMOYLALANINE--D-GLUTAMATE LIGASE"/>
    <property type="match status" value="1"/>
</dbReference>
<dbReference type="Pfam" id="PF08245">
    <property type="entry name" value="Mur_ligase_M"/>
    <property type="match status" value="1"/>
</dbReference>
<dbReference type="SUPFAM" id="SSF53623">
    <property type="entry name" value="MurD-like peptide ligases, catalytic domain"/>
    <property type="match status" value="1"/>
</dbReference>
<dbReference type="SUPFAM" id="SSF53244">
    <property type="entry name" value="MurD-like peptide ligases, peptide-binding domain"/>
    <property type="match status" value="1"/>
</dbReference>
<organism>
    <name type="scientific">Xanthomonas oryzae pv. oryzae (strain MAFF 311018)</name>
    <dbReference type="NCBI Taxonomy" id="342109"/>
    <lineage>
        <taxon>Bacteria</taxon>
        <taxon>Pseudomonadati</taxon>
        <taxon>Pseudomonadota</taxon>
        <taxon>Gammaproteobacteria</taxon>
        <taxon>Lysobacterales</taxon>
        <taxon>Lysobacteraceae</taxon>
        <taxon>Xanthomonas</taxon>
    </lineage>
</organism>
<comment type="function">
    <text evidence="2">Cell wall formation. Catalyzes the addition of L-glutamate to the nucleotide precursor UDP-N-acetylmuramoyl-L-alanine. Has weak activity with D-glutamate.</text>
</comment>
<comment type="catalytic activity">
    <reaction evidence="1 2">
        <text>UDP-N-acetyl-alpha-D-muramoyl-L-alanine + L-glutamate + ATP = UDP-N-acetyl-alpha-D-muramoyl-L-alanyl-L-glutamate + ADP + phosphate + H(+)</text>
        <dbReference type="Rhea" id="RHEA:58816"/>
        <dbReference type="ChEBI" id="CHEBI:15378"/>
        <dbReference type="ChEBI" id="CHEBI:29985"/>
        <dbReference type="ChEBI" id="CHEBI:30616"/>
        <dbReference type="ChEBI" id="CHEBI:43474"/>
        <dbReference type="ChEBI" id="CHEBI:83898"/>
        <dbReference type="ChEBI" id="CHEBI:142725"/>
        <dbReference type="ChEBI" id="CHEBI:456216"/>
        <dbReference type="EC" id="6.3.2.53"/>
    </reaction>
</comment>
<comment type="pathway">
    <text evidence="1 5">Cell wall biogenesis; peptidoglycan biosynthesis.</text>
</comment>
<comment type="subcellular location">
    <subcellularLocation>
        <location evidence="1 4">Cytoplasm</location>
    </subcellularLocation>
</comment>
<comment type="miscellaneous">
    <text evidence="5">The combined activity of MurD2 and MurL provides an alternative route for incorporating D-glutamate into peptidoglycan.</text>
</comment>
<comment type="similarity">
    <text evidence="1 4">Belongs to the MurCDEF family. MurD2 subfamily.</text>
</comment>
<sequence>MRISQFEGKAVALWGWGREGRGAYRALRAQLPTQSLTMFCNAEEVRELESLADAALHVETDASAQALGRFEIVVKSPGISPYRAEALAAAAQGTQFIGGTALWFAEHAQPDGSVPGAICVTGTKGKSTTTALLAHLLRVAGHRTALVGNIGQPLLEVLAPQPPPAYWAIELSSYQTGDVGRSGARPELAVVLNLFPEHLDWHGDEARYVRDKLSLVTEGRPRIVLLNAADPLLASLQLPDSEVLWFNHPEGWHLRGDVVYRGEQAIFDSADVPLPGVHNRRNLCAVLAALEALGLDAEALAPAALSFRPLPNRLQVLGSVDGISYVNDSISTTPYASLAALACFAQRRVALLVGGHDRGLDWHDFARHMAQQAPLEIVTMAANGPRIHALLAPLADAGRFGLHAANDLEHAMQLARDALGGQGGVVLLSPGAPSFGAYSDYVARGRHFAQLAGFDPAAISAIPGLGVH</sequence>